<organism>
    <name type="scientific">Bacillus cereus (strain ATCC 14579 / DSM 31 / CCUG 7414 / JCM 2152 / NBRC 15305 / NCIMB 9373 / NCTC 2599 / NRRL B-3711)</name>
    <dbReference type="NCBI Taxonomy" id="226900"/>
    <lineage>
        <taxon>Bacteria</taxon>
        <taxon>Bacillati</taxon>
        <taxon>Bacillota</taxon>
        <taxon>Bacilli</taxon>
        <taxon>Bacillales</taxon>
        <taxon>Bacillaceae</taxon>
        <taxon>Bacillus</taxon>
        <taxon>Bacillus cereus group</taxon>
    </lineage>
</organism>
<comment type="function">
    <text evidence="1">Protease subunit of a proteasome-like degradation complex believed to be a general protein degrading machinery.</text>
</comment>
<comment type="catalytic activity">
    <reaction evidence="1">
        <text>ATP-dependent cleavage of peptide bonds with broad specificity.</text>
        <dbReference type="EC" id="3.4.25.2"/>
    </reaction>
</comment>
<comment type="activity regulation">
    <text evidence="1">Allosterically activated by HslU binding.</text>
</comment>
<comment type="subunit">
    <text evidence="1">A double ring-shaped homohexamer of HslV is capped on each side by a ring-shaped HslU homohexamer. The assembly of the HslU/HslV complex is dependent on binding of ATP.</text>
</comment>
<comment type="subcellular location">
    <subcellularLocation>
        <location evidence="1">Cytoplasm</location>
    </subcellularLocation>
</comment>
<comment type="similarity">
    <text evidence="1">Belongs to the peptidase T1B family. HslV subfamily.</text>
</comment>
<protein>
    <recommendedName>
        <fullName evidence="1">ATP-dependent protease subunit HslV</fullName>
        <ecNumber evidence="1">3.4.25.2</ecNumber>
    </recommendedName>
</protein>
<sequence>MGNFHATTIFAVHHNGECAMAGDGQVTMGNAVVMKHTARKVRKLFQGKVLAGFAGSVADAFTLFEMFEGKLEEYNGNLQRAAVEMAKQWRGDKMLRQLEAMLIVMDKTTMLLVSGTGEVIEPDDGILAIGSGGNYALSAGRALKQYASEHLTAKQIAKASLEIAGDICVYTNHNIIVEEL</sequence>
<gene>
    <name evidence="1" type="primary">hslV</name>
    <name type="ordered locus">BC_3828</name>
</gene>
<dbReference type="EC" id="3.4.25.2" evidence="1"/>
<dbReference type="EMBL" id="AE016877">
    <property type="protein sequence ID" value="AAP10750.1"/>
    <property type="molecule type" value="Genomic_DNA"/>
</dbReference>
<dbReference type="RefSeq" id="NP_833549.1">
    <property type="nucleotide sequence ID" value="NC_004722.1"/>
</dbReference>
<dbReference type="RefSeq" id="WP_000526272.1">
    <property type="nucleotide sequence ID" value="NZ_CP138336.1"/>
</dbReference>
<dbReference type="SMR" id="Q819X6"/>
<dbReference type="STRING" id="226900.BC_3828"/>
<dbReference type="MEROPS" id="T01.007"/>
<dbReference type="GeneID" id="45023658"/>
<dbReference type="KEGG" id="bce:BC3828"/>
<dbReference type="PATRIC" id="fig|226900.8.peg.3947"/>
<dbReference type="HOGENOM" id="CLU_093872_1_0_9"/>
<dbReference type="OrthoDB" id="9804884at2"/>
<dbReference type="Proteomes" id="UP000001417">
    <property type="component" value="Chromosome"/>
</dbReference>
<dbReference type="GO" id="GO:0005737">
    <property type="term" value="C:cytoplasm"/>
    <property type="evidence" value="ECO:0000318"/>
    <property type="project" value="GO_Central"/>
</dbReference>
<dbReference type="GO" id="GO:0009376">
    <property type="term" value="C:HslUV protease complex"/>
    <property type="evidence" value="ECO:0007669"/>
    <property type="project" value="UniProtKB-UniRule"/>
</dbReference>
<dbReference type="GO" id="GO:0005839">
    <property type="term" value="C:proteasome core complex"/>
    <property type="evidence" value="ECO:0007669"/>
    <property type="project" value="InterPro"/>
</dbReference>
<dbReference type="GO" id="GO:0046872">
    <property type="term" value="F:metal ion binding"/>
    <property type="evidence" value="ECO:0007669"/>
    <property type="project" value="UniProtKB-KW"/>
</dbReference>
<dbReference type="GO" id="GO:0004298">
    <property type="term" value="F:threonine-type endopeptidase activity"/>
    <property type="evidence" value="ECO:0007669"/>
    <property type="project" value="UniProtKB-KW"/>
</dbReference>
<dbReference type="GO" id="GO:0051603">
    <property type="term" value="P:proteolysis involved in protein catabolic process"/>
    <property type="evidence" value="ECO:0000318"/>
    <property type="project" value="GO_Central"/>
</dbReference>
<dbReference type="CDD" id="cd01913">
    <property type="entry name" value="protease_HslV"/>
    <property type="match status" value="1"/>
</dbReference>
<dbReference type="Gene3D" id="3.60.20.10">
    <property type="entry name" value="Glutamine Phosphoribosylpyrophosphate, subunit 1, domain 1"/>
    <property type="match status" value="1"/>
</dbReference>
<dbReference type="HAMAP" id="MF_00248">
    <property type="entry name" value="HslV"/>
    <property type="match status" value="1"/>
</dbReference>
<dbReference type="InterPro" id="IPR022281">
    <property type="entry name" value="ATP-dep_Prtase_HsIV_su"/>
</dbReference>
<dbReference type="InterPro" id="IPR029055">
    <property type="entry name" value="Ntn_hydrolases_N"/>
</dbReference>
<dbReference type="InterPro" id="IPR001353">
    <property type="entry name" value="Proteasome_sua/b"/>
</dbReference>
<dbReference type="InterPro" id="IPR023333">
    <property type="entry name" value="Proteasome_suB-type"/>
</dbReference>
<dbReference type="NCBIfam" id="TIGR03692">
    <property type="entry name" value="ATP_dep_HslV"/>
    <property type="match status" value="1"/>
</dbReference>
<dbReference type="NCBIfam" id="NF003964">
    <property type="entry name" value="PRK05456.1"/>
    <property type="match status" value="1"/>
</dbReference>
<dbReference type="PANTHER" id="PTHR32194:SF0">
    <property type="entry name" value="ATP-DEPENDENT PROTEASE SUBUNIT HSLV"/>
    <property type="match status" value="1"/>
</dbReference>
<dbReference type="PANTHER" id="PTHR32194">
    <property type="entry name" value="METALLOPROTEASE TLDD"/>
    <property type="match status" value="1"/>
</dbReference>
<dbReference type="Pfam" id="PF00227">
    <property type="entry name" value="Proteasome"/>
    <property type="match status" value="1"/>
</dbReference>
<dbReference type="PIRSF" id="PIRSF039093">
    <property type="entry name" value="HslV"/>
    <property type="match status" value="1"/>
</dbReference>
<dbReference type="SUPFAM" id="SSF56235">
    <property type="entry name" value="N-terminal nucleophile aminohydrolases (Ntn hydrolases)"/>
    <property type="match status" value="1"/>
</dbReference>
<dbReference type="PROSITE" id="PS51476">
    <property type="entry name" value="PROTEASOME_BETA_2"/>
    <property type="match status" value="1"/>
</dbReference>
<name>HSLV_BACCR</name>
<reference key="1">
    <citation type="journal article" date="2003" name="Nature">
        <title>Genome sequence of Bacillus cereus and comparative analysis with Bacillus anthracis.</title>
        <authorList>
            <person name="Ivanova N."/>
            <person name="Sorokin A."/>
            <person name="Anderson I."/>
            <person name="Galleron N."/>
            <person name="Candelon B."/>
            <person name="Kapatral V."/>
            <person name="Bhattacharyya A."/>
            <person name="Reznik G."/>
            <person name="Mikhailova N."/>
            <person name="Lapidus A."/>
            <person name="Chu L."/>
            <person name="Mazur M."/>
            <person name="Goltsman E."/>
            <person name="Larsen N."/>
            <person name="D'Souza M."/>
            <person name="Walunas T."/>
            <person name="Grechkin Y."/>
            <person name="Pusch G."/>
            <person name="Haselkorn R."/>
            <person name="Fonstein M."/>
            <person name="Ehrlich S.D."/>
            <person name="Overbeek R."/>
            <person name="Kyrpides N.C."/>
        </authorList>
    </citation>
    <scope>NUCLEOTIDE SEQUENCE [LARGE SCALE GENOMIC DNA]</scope>
    <source>
        <strain>ATCC 14579 / DSM 31 / CCUG 7414 / JCM 2152 / NBRC 15305 / NCIMB 9373 / NCTC 2599 / NRRL B-3711</strain>
    </source>
</reference>
<feature type="chain" id="PRO_0000148079" description="ATP-dependent protease subunit HslV">
    <location>
        <begin position="1"/>
        <end position="180"/>
    </location>
</feature>
<feature type="active site" evidence="1">
    <location>
        <position position="7"/>
    </location>
</feature>
<feature type="binding site" evidence="1">
    <location>
        <position position="165"/>
    </location>
    <ligand>
        <name>Na(+)</name>
        <dbReference type="ChEBI" id="CHEBI:29101"/>
    </ligand>
</feature>
<feature type="binding site" evidence="1">
    <location>
        <position position="168"/>
    </location>
    <ligand>
        <name>Na(+)</name>
        <dbReference type="ChEBI" id="CHEBI:29101"/>
    </ligand>
</feature>
<feature type="binding site" evidence="1">
    <location>
        <position position="171"/>
    </location>
    <ligand>
        <name>Na(+)</name>
        <dbReference type="ChEBI" id="CHEBI:29101"/>
    </ligand>
</feature>
<accession>Q819X6</accession>
<evidence type="ECO:0000255" key="1">
    <source>
        <dbReference type="HAMAP-Rule" id="MF_00248"/>
    </source>
</evidence>
<proteinExistence type="inferred from homology"/>
<keyword id="KW-0021">Allosteric enzyme</keyword>
<keyword id="KW-0963">Cytoplasm</keyword>
<keyword id="KW-0378">Hydrolase</keyword>
<keyword id="KW-0479">Metal-binding</keyword>
<keyword id="KW-0645">Protease</keyword>
<keyword id="KW-1185">Reference proteome</keyword>
<keyword id="KW-0915">Sodium</keyword>
<keyword id="KW-0888">Threonine protease</keyword>